<dbReference type="SMR" id="P0C5K8"/>
<dbReference type="GO" id="GO:0005576">
    <property type="term" value="C:extracellular region"/>
    <property type="evidence" value="ECO:0007669"/>
    <property type="project" value="UniProtKB-SubCell"/>
</dbReference>
<dbReference type="GO" id="GO:0019871">
    <property type="term" value="F:sodium channel inhibitor activity"/>
    <property type="evidence" value="ECO:0007669"/>
    <property type="project" value="InterPro"/>
</dbReference>
<dbReference type="GO" id="GO:0090729">
    <property type="term" value="F:toxin activity"/>
    <property type="evidence" value="ECO:0007669"/>
    <property type="project" value="UniProtKB-KW"/>
</dbReference>
<dbReference type="GO" id="GO:0006952">
    <property type="term" value="P:defense response"/>
    <property type="evidence" value="ECO:0007669"/>
    <property type="project" value="InterPro"/>
</dbReference>
<dbReference type="CDD" id="cd23106">
    <property type="entry name" value="neurotoxins_LC_scorpion"/>
    <property type="match status" value="1"/>
</dbReference>
<dbReference type="Gene3D" id="3.30.30.10">
    <property type="entry name" value="Knottin, scorpion toxin-like"/>
    <property type="match status" value="1"/>
</dbReference>
<dbReference type="InterPro" id="IPR044062">
    <property type="entry name" value="LCN-type_CS_alpha_beta_dom"/>
</dbReference>
<dbReference type="InterPro" id="IPR003614">
    <property type="entry name" value="Scorpion_toxin-like"/>
</dbReference>
<dbReference type="InterPro" id="IPR036574">
    <property type="entry name" value="Scorpion_toxin-like_sf"/>
</dbReference>
<dbReference type="InterPro" id="IPR018218">
    <property type="entry name" value="Scorpion_toxinL"/>
</dbReference>
<dbReference type="InterPro" id="IPR002061">
    <property type="entry name" value="Scorpion_toxinL/defensin"/>
</dbReference>
<dbReference type="Pfam" id="PF00537">
    <property type="entry name" value="Toxin_3"/>
    <property type="match status" value="1"/>
</dbReference>
<dbReference type="PRINTS" id="PR00285">
    <property type="entry name" value="SCORPNTOXIN"/>
</dbReference>
<dbReference type="SMART" id="SM00505">
    <property type="entry name" value="Knot1"/>
    <property type="match status" value="1"/>
</dbReference>
<dbReference type="SUPFAM" id="SSF57095">
    <property type="entry name" value="Scorpion toxin-like"/>
    <property type="match status" value="1"/>
</dbReference>
<dbReference type="PROSITE" id="PS51863">
    <property type="entry name" value="LCN_CSAB"/>
    <property type="match status" value="1"/>
</dbReference>
<feature type="signal peptide" evidence="3">
    <location>
        <begin position="1"/>
        <end position="19"/>
    </location>
</feature>
<feature type="chain" id="PRO_0000309006" description="Alpha-toxin TbTx5" evidence="6">
    <location>
        <begin position="20"/>
        <end position="83"/>
    </location>
</feature>
<feature type="domain" description="LCN-type CS-alpha/beta" evidence="4">
    <location>
        <begin position="21"/>
        <end position="82"/>
    </location>
</feature>
<feature type="modified residue" description="Proline amide" evidence="1">
    <location>
        <position position="83"/>
    </location>
</feature>
<feature type="disulfide bond" evidence="4">
    <location>
        <begin position="31"/>
        <end position="81"/>
    </location>
</feature>
<feature type="disulfide bond" evidence="4">
    <location>
        <begin position="35"/>
        <end position="57"/>
    </location>
</feature>
<feature type="disulfide bond" evidence="4">
    <location>
        <begin position="43"/>
        <end position="64"/>
    </location>
</feature>
<feature type="disulfide bond" evidence="4">
    <location>
        <begin position="47"/>
        <end position="66"/>
    </location>
</feature>
<name>SCX5_TITBA</name>
<reference key="1">
    <citation type="journal article" date="2001" name="Toxicon">
        <title>Screening of expression libraries using ELISA: identification of immunogenic proteins from Tityus bahiensis and Tityus serrulatus venom.</title>
        <authorList>
            <person name="Kalapothakis E."/>
            <person name="Jardim S."/>
            <person name="Magalhaes A.C."/>
            <person name="Mendes T.M."/>
            <person name="De Marco L."/>
            <person name="Afonso L.C.C."/>
            <person name="Chavez-Olortegui C."/>
        </authorList>
    </citation>
    <scope>NUCLEOTIDE SEQUENCE [MRNA]</scope>
    <source>
        <tissue>Venom gland</tissue>
    </source>
</reference>
<reference key="2">
    <citation type="journal article" date="2012" name="PLoS ONE">
        <title>Identification and phylogenetic analysis of Tityus pachyurus and Tityus obscurus novel putative Na+-channel scorpion toxins.</title>
        <authorList>
            <person name="Guerrero-Vargas J.A."/>
            <person name="Mourao C.B."/>
            <person name="Quintero-Hernandez V."/>
            <person name="Possani L.D."/>
            <person name="Schwartz E.F."/>
        </authorList>
    </citation>
    <scope>NOMENCLATURE</scope>
</reference>
<sequence>MNDFVFLVVACLLTAGTEGKKDGYPVEGDNCAFVCFGYDNAYCDKLCKDKKADSGYCYWVHILCYCYGLPDKEPTKTNGRCKPGKK</sequence>
<keyword id="KW-0027">Amidation</keyword>
<keyword id="KW-1015">Disulfide bond</keyword>
<keyword id="KW-0872">Ion channel impairing toxin</keyword>
<keyword id="KW-0528">Neurotoxin</keyword>
<keyword id="KW-0964">Secreted</keyword>
<keyword id="KW-0732">Signal</keyword>
<keyword id="KW-0800">Toxin</keyword>
<keyword id="KW-0738">Voltage-gated sodium channel impairing toxin</keyword>
<protein>
    <recommendedName>
        <fullName evidence="6">Alpha-toxin TbTx5</fullName>
    </recommendedName>
    <alternativeName>
        <fullName>T-alpha* NaTx3.4</fullName>
    </alternativeName>
</protein>
<organism>
    <name type="scientific">Tityus bahiensis</name>
    <name type="common">Brazilian scorpion</name>
    <dbReference type="NCBI Taxonomy" id="50343"/>
    <lineage>
        <taxon>Eukaryota</taxon>
        <taxon>Metazoa</taxon>
        <taxon>Ecdysozoa</taxon>
        <taxon>Arthropoda</taxon>
        <taxon>Chelicerata</taxon>
        <taxon>Arachnida</taxon>
        <taxon>Scorpiones</taxon>
        <taxon>Buthida</taxon>
        <taxon>Buthoidea</taxon>
        <taxon>Buthidae</taxon>
        <taxon>Tityus</taxon>
    </lineage>
</organism>
<comment type="function">
    <text evidence="2">Alpha toxins bind voltage-independently at site-3 of sodium channels (Nav) and inhibit the inactivation of the activated channels, thereby blocking neuronal transmission.</text>
</comment>
<comment type="subcellular location">
    <subcellularLocation>
        <location evidence="6">Secreted</location>
    </subcellularLocation>
</comment>
<comment type="tissue specificity">
    <text evidence="6">Expressed by the venom gland.</text>
</comment>
<comment type="domain">
    <text evidence="5">Has the structural arrangement of an alpha-helix connected to antiparallel beta-sheets by disulfide bonds (CS-alpha/beta).</text>
</comment>
<comment type="similarity">
    <text evidence="5">Belongs to the long (4 C-C) scorpion toxin superfamily. Sodium channel inhibitor family. Alpha subfamily.</text>
</comment>
<accession>P0C5K8</accession>
<evidence type="ECO:0000250" key="1">
    <source>
        <dbReference type="UniProtKB" id="P01484"/>
    </source>
</evidence>
<evidence type="ECO:0000250" key="2">
    <source>
        <dbReference type="UniProtKB" id="P01496"/>
    </source>
</evidence>
<evidence type="ECO:0000255" key="3"/>
<evidence type="ECO:0000255" key="4">
    <source>
        <dbReference type="PROSITE-ProRule" id="PRU01210"/>
    </source>
</evidence>
<evidence type="ECO:0000305" key="5"/>
<evidence type="ECO:0000305" key="6">
    <source>
    </source>
</evidence>
<proteinExistence type="inferred from homology"/>